<reference key="1">
    <citation type="journal article" date="2008" name="PLoS ONE">
        <title>A recalibrated molecular clock and independent origins for the cholera pandemic clones.</title>
        <authorList>
            <person name="Feng L."/>
            <person name="Reeves P.R."/>
            <person name="Lan R."/>
            <person name="Ren Y."/>
            <person name="Gao C."/>
            <person name="Zhou Z."/>
            <person name="Ren Y."/>
            <person name="Cheng J."/>
            <person name="Wang W."/>
            <person name="Wang J."/>
            <person name="Qian W."/>
            <person name="Li D."/>
            <person name="Wang L."/>
        </authorList>
    </citation>
    <scope>NUCLEOTIDE SEQUENCE [LARGE SCALE GENOMIC DNA]</scope>
    <source>
        <strain>M66-2</strain>
    </source>
</reference>
<organism>
    <name type="scientific">Vibrio cholerae serotype O1 (strain M66-2)</name>
    <dbReference type="NCBI Taxonomy" id="579112"/>
    <lineage>
        <taxon>Bacteria</taxon>
        <taxon>Pseudomonadati</taxon>
        <taxon>Pseudomonadota</taxon>
        <taxon>Gammaproteobacteria</taxon>
        <taxon>Vibrionales</taxon>
        <taxon>Vibrionaceae</taxon>
        <taxon>Vibrio</taxon>
    </lineage>
</organism>
<evidence type="ECO:0000255" key="1">
    <source>
        <dbReference type="HAMAP-Rule" id="MF_00385"/>
    </source>
</evidence>
<evidence type="ECO:0000305" key="2"/>
<accession>C3LS51</accession>
<sequence length="82" mass="9082">MVTIRLARHGAKKRPFYQIVVADSRNSATGRFIEKVGFFNPTATGQEEGLRLDLDRVNHWVSQGASLSDRVAQLVKTAQKAA</sequence>
<gene>
    <name evidence="1" type="primary">rpsP</name>
    <name type="ordered locus">VCM66_0519</name>
</gene>
<name>RS16_VIBCM</name>
<comment type="similarity">
    <text evidence="1">Belongs to the bacterial ribosomal protein bS16 family.</text>
</comment>
<dbReference type="EMBL" id="CP001233">
    <property type="protein sequence ID" value="ACP04844.1"/>
    <property type="molecule type" value="Genomic_DNA"/>
</dbReference>
<dbReference type="RefSeq" id="WP_000256449.1">
    <property type="nucleotide sequence ID" value="NC_012578.1"/>
</dbReference>
<dbReference type="SMR" id="C3LS51"/>
<dbReference type="GeneID" id="94014658"/>
<dbReference type="KEGG" id="vcm:VCM66_0519"/>
<dbReference type="HOGENOM" id="CLU_100590_5_1_6"/>
<dbReference type="Proteomes" id="UP000001217">
    <property type="component" value="Chromosome I"/>
</dbReference>
<dbReference type="GO" id="GO:0005737">
    <property type="term" value="C:cytoplasm"/>
    <property type="evidence" value="ECO:0007669"/>
    <property type="project" value="UniProtKB-ARBA"/>
</dbReference>
<dbReference type="GO" id="GO:0015935">
    <property type="term" value="C:small ribosomal subunit"/>
    <property type="evidence" value="ECO:0007669"/>
    <property type="project" value="TreeGrafter"/>
</dbReference>
<dbReference type="GO" id="GO:0003735">
    <property type="term" value="F:structural constituent of ribosome"/>
    <property type="evidence" value="ECO:0007669"/>
    <property type="project" value="InterPro"/>
</dbReference>
<dbReference type="GO" id="GO:0006412">
    <property type="term" value="P:translation"/>
    <property type="evidence" value="ECO:0007669"/>
    <property type="project" value="UniProtKB-UniRule"/>
</dbReference>
<dbReference type="FunFam" id="3.30.1320.10:FF:000001">
    <property type="entry name" value="30S ribosomal protein S16"/>
    <property type="match status" value="1"/>
</dbReference>
<dbReference type="Gene3D" id="3.30.1320.10">
    <property type="match status" value="1"/>
</dbReference>
<dbReference type="HAMAP" id="MF_00385">
    <property type="entry name" value="Ribosomal_bS16"/>
    <property type="match status" value="1"/>
</dbReference>
<dbReference type="InterPro" id="IPR000307">
    <property type="entry name" value="Ribosomal_bS16"/>
</dbReference>
<dbReference type="InterPro" id="IPR020592">
    <property type="entry name" value="Ribosomal_bS16_CS"/>
</dbReference>
<dbReference type="InterPro" id="IPR023803">
    <property type="entry name" value="Ribosomal_bS16_dom_sf"/>
</dbReference>
<dbReference type="NCBIfam" id="TIGR00002">
    <property type="entry name" value="S16"/>
    <property type="match status" value="1"/>
</dbReference>
<dbReference type="PANTHER" id="PTHR12919">
    <property type="entry name" value="30S RIBOSOMAL PROTEIN S16"/>
    <property type="match status" value="1"/>
</dbReference>
<dbReference type="PANTHER" id="PTHR12919:SF20">
    <property type="entry name" value="SMALL RIBOSOMAL SUBUNIT PROTEIN BS16M"/>
    <property type="match status" value="1"/>
</dbReference>
<dbReference type="Pfam" id="PF00886">
    <property type="entry name" value="Ribosomal_S16"/>
    <property type="match status" value="1"/>
</dbReference>
<dbReference type="SUPFAM" id="SSF54565">
    <property type="entry name" value="Ribosomal protein S16"/>
    <property type="match status" value="1"/>
</dbReference>
<dbReference type="PROSITE" id="PS00732">
    <property type="entry name" value="RIBOSOMAL_S16"/>
    <property type="match status" value="1"/>
</dbReference>
<keyword id="KW-0687">Ribonucleoprotein</keyword>
<keyword id="KW-0689">Ribosomal protein</keyword>
<feature type="chain" id="PRO_1000134334" description="Small ribosomal subunit protein bS16">
    <location>
        <begin position="1"/>
        <end position="82"/>
    </location>
</feature>
<proteinExistence type="inferred from homology"/>
<protein>
    <recommendedName>
        <fullName evidence="1">Small ribosomal subunit protein bS16</fullName>
    </recommendedName>
    <alternativeName>
        <fullName evidence="2">30S ribosomal protein S16</fullName>
    </alternativeName>
</protein>